<reference key="1">
    <citation type="journal article" date="2014" name="J. Integr. Plant Biol.">
        <title>An auxin-responsive endogenous peptide regulates root development in Arabidopsis.</title>
        <authorList>
            <person name="Yang F."/>
            <person name="Song Y."/>
            <person name="Yang H."/>
            <person name="Liu Z."/>
            <person name="Zhu G."/>
            <person name="Yang Y."/>
        </authorList>
    </citation>
    <scope>NUCLEOTIDE SEQUENCE [MRNA]</scope>
    <scope>IDENTIFICATION</scope>
    <scope>FUNCTION</scope>
    <scope>INDUCTION BY AUXIN</scope>
    <scope>SUBCELLULAR LOCATION</scope>
    <scope>DEVELOPMENTAL STAGE</scope>
    <scope>TISSUE SPECIFICITY</scope>
    <source>
        <strain>cv. Columbia</strain>
    </source>
</reference>
<reference key="2">
    <citation type="journal article" date="2000" name="Nature">
        <title>Sequence and analysis of chromosome 1 of the plant Arabidopsis thaliana.</title>
        <authorList>
            <person name="Theologis A."/>
            <person name="Ecker J.R."/>
            <person name="Palm C.J."/>
            <person name="Federspiel N.A."/>
            <person name="Kaul S."/>
            <person name="White O."/>
            <person name="Alonso J."/>
            <person name="Altafi H."/>
            <person name="Araujo R."/>
            <person name="Bowman C.L."/>
            <person name="Brooks S.Y."/>
            <person name="Buehler E."/>
            <person name="Chan A."/>
            <person name="Chao Q."/>
            <person name="Chen H."/>
            <person name="Cheuk R.F."/>
            <person name="Chin C.W."/>
            <person name="Chung M.K."/>
            <person name="Conn L."/>
            <person name="Conway A.B."/>
            <person name="Conway A.R."/>
            <person name="Creasy T.H."/>
            <person name="Dewar K."/>
            <person name="Dunn P."/>
            <person name="Etgu P."/>
            <person name="Feldblyum T.V."/>
            <person name="Feng J.-D."/>
            <person name="Fong B."/>
            <person name="Fujii C.Y."/>
            <person name="Gill J.E."/>
            <person name="Goldsmith A.D."/>
            <person name="Haas B."/>
            <person name="Hansen N.F."/>
            <person name="Hughes B."/>
            <person name="Huizar L."/>
            <person name="Hunter J.L."/>
            <person name="Jenkins J."/>
            <person name="Johnson-Hopson C."/>
            <person name="Khan S."/>
            <person name="Khaykin E."/>
            <person name="Kim C.J."/>
            <person name="Koo H.L."/>
            <person name="Kremenetskaia I."/>
            <person name="Kurtz D.B."/>
            <person name="Kwan A."/>
            <person name="Lam B."/>
            <person name="Langin-Hooper S."/>
            <person name="Lee A."/>
            <person name="Lee J.M."/>
            <person name="Lenz C.A."/>
            <person name="Li J.H."/>
            <person name="Li Y.-P."/>
            <person name="Lin X."/>
            <person name="Liu S.X."/>
            <person name="Liu Z.A."/>
            <person name="Luros J.S."/>
            <person name="Maiti R."/>
            <person name="Marziali A."/>
            <person name="Militscher J."/>
            <person name="Miranda M."/>
            <person name="Nguyen M."/>
            <person name="Nierman W.C."/>
            <person name="Osborne B.I."/>
            <person name="Pai G."/>
            <person name="Peterson J."/>
            <person name="Pham P.K."/>
            <person name="Rizzo M."/>
            <person name="Rooney T."/>
            <person name="Rowley D."/>
            <person name="Sakano H."/>
            <person name="Salzberg S.L."/>
            <person name="Schwartz J.R."/>
            <person name="Shinn P."/>
            <person name="Southwick A.M."/>
            <person name="Sun H."/>
            <person name="Tallon L.J."/>
            <person name="Tambunga G."/>
            <person name="Toriumi M.J."/>
            <person name="Town C.D."/>
            <person name="Utterback T."/>
            <person name="Van Aken S."/>
            <person name="Vaysberg M."/>
            <person name="Vysotskaia V.S."/>
            <person name="Walker M."/>
            <person name="Wu D."/>
            <person name="Yu G."/>
            <person name="Fraser C.M."/>
            <person name="Venter J.C."/>
            <person name="Davis R.W."/>
        </authorList>
    </citation>
    <scope>NUCLEOTIDE SEQUENCE [LARGE SCALE GENOMIC DNA]</scope>
    <source>
        <strain>cv. Columbia</strain>
    </source>
</reference>
<reference key="3">
    <citation type="journal article" date="2017" name="Plant J.">
        <title>Araport11: a complete reannotation of the Arabidopsis thaliana reference genome.</title>
        <authorList>
            <person name="Cheng C.Y."/>
            <person name="Krishnakumar V."/>
            <person name="Chan A.P."/>
            <person name="Thibaud-Nissen F."/>
            <person name="Schobel S."/>
            <person name="Town C.D."/>
        </authorList>
    </citation>
    <scope>GENOME REANNOTATION</scope>
    <source>
        <strain>cv. Columbia</strain>
    </source>
</reference>
<sequence length="40" mass="4747">MGLSDCLIYRLVVRCFLDYSICAPFYFYHKFMLSASEPVF</sequence>
<organism>
    <name type="scientific">Arabidopsis thaliana</name>
    <name type="common">Mouse-ear cress</name>
    <dbReference type="NCBI Taxonomy" id="3702"/>
    <lineage>
        <taxon>Eukaryota</taxon>
        <taxon>Viridiplantae</taxon>
        <taxon>Streptophyta</taxon>
        <taxon>Embryophyta</taxon>
        <taxon>Tracheophyta</taxon>
        <taxon>Spermatophyta</taxon>
        <taxon>Magnoliopsida</taxon>
        <taxon>eudicotyledons</taxon>
        <taxon>Gunneridae</taxon>
        <taxon>Pentapetalae</taxon>
        <taxon>rosids</taxon>
        <taxon>malvids</taxon>
        <taxon>Brassicales</taxon>
        <taxon>Brassicaceae</taxon>
        <taxon>Camelineae</taxon>
        <taxon>Arabidopsis</taxon>
    </lineage>
</organism>
<name>AREP1_ARATH</name>
<dbReference type="EMBL" id="AC023628">
    <property type="status" value="NOT_ANNOTATED_CDS"/>
    <property type="molecule type" value="Genomic_DNA"/>
</dbReference>
<dbReference type="EMBL" id="CP002684">
    <property type="protein sequence ID" value="ANM60886.1"/>
    <property type="molecule type" value="Genomic_DNA"/>
</dbReference>
<dbReference type="RefSeq" id="NP_001323136.1">
    <property type="nucleotide sequence ID" value="NM_001331266.1"/>
</dbReference>
<dbReference type="STRING" id="3702.P0DKH9"/>
<dbReference type="EnsemblPlants" id="AT1G01335.1">
    <property type="protein sequence ID" value="AT1G01335.1"/>
    <property type="gene ID" value="AT1G01335"/>
</dbReference>
<dbReference type="GeneID" id="28716020"/>
<dbReference type="Gramene" id="AT1G01335.1">
    <property type="protein sequence ID" value="AT1G01335.1"/>
    <property type="gene ID" value="AT1G01335"/>
</dbReference>
<dbReference type="KEGG" id="ath:AT1G01335"/>
<dbReference type="Araport" id="AT1G01335"/>
<dbReference type="TAIR" id="AT1G01335">
    <property type="gene designation" value="AREP1"/>
</dbReference>
<dbReference type="InParanoid" id="P0DKH9"/>
<dbReference type="PRO" id="PR:P0DKH9"/>
<dbReference type="Proteomes" id="UP000006548">
    <property type="component" value="Chromosome 1"/>
</dbReference>
<dbReference type="GO" id="GO:0005737">
    <property type="term" value="C:cytoplasm"/>
    <property type="evidence" value="ECO:0000314"/>
    <property type="project" value="UniProtKB"/>
</dbReference>
<dbReference type="GO" id="GO:0016020">
    <property type="term" value="C:membrane"/>
    <property type="evidence" value="ECO:0007669"/>
    <property type="project" value="UniProtKB-SubCell"/>
</dbReference>
<dbReference type="GO" id="GO:0005634">
    <property type="term" value="C:nucleus"/>
    <property type="evidence" value="ECO:0000314"/>
    <property type="project" value="UniProtKB"/>
</dbReference>
<dbReference type="GO" id="GO:0009734">
    <property type="term" value="P:auxin-activated signaling pathway"/>
    <property type="evidence" value="ECO:0007669"/>
    <property type="project" value="UniProtKB-KW"/>
</dbReference>
<dbReference type="GO" id="GO:0010930">
    <property type="term" value="P:negative regulation of auxin mediated signaling pathway"/>
    <property type="evidence" value="ECO:0000315"/>
    <property type="project" value="UniProtKB"/>
</dbReference>
<dbReference type="GO" id="GO:0048364">
    <property type="term" value="P:root development"/>
    <property type="evidence" value="ECO:0000315"/>
    <property type="project" value="UniProtKB"/>
</dbReference>
<accession>P0DKH9</accession>
<comment type="function">
    <text evidence="2">Negative regulator of the auxin response.</text>
</comment>
<comment type="subcellular location">
    <subcellularLocation>
        <location evidence="2">Cytoplasm</location>
    </subcellularLocation>
    <subcellularLocation>
        <location evidence="2">Nucleus</location>
    </subcellularLocation>
    <subcellularLocation>
        <location evidence="1">Membrane</location>
        <topology evidence="1">Single-pass membrane protein</topology>
    </subcellularLocation>
    <text evidence="2">Not localized under normal conditions, but found in the cytoplasm and in the nucleus when auxin is added.</text>
</comment>
<comment type="tissue specificity">
    <text evidence="2">Expressed in cotyledons, hypocotyls, roots, newly developing leaves and shoot apical meristem. Not detected in flowers, siliques or mature leaves.</text>
</comment>
<comment type="developmental stage">
    <text evidence="2">Expressed during the primary developmental stages.</text>
</comment>
<comment type="induction">
    <text evidence="2">Up-regulated by auxin.</text>
</comment>
<comment type="miscellaneous">
    <text evidence="2">Knock-down mutants have no visible phenotype in the absence of exogenous auxin, but are more sensitive to auxin-induced inhibition of root elongation and initiation of lateral roots.</text>
</comment>
<gene>
    <name evidence="3" type="primary">AREP1</name>
    <name type="ordered locus">At1g01335</name>
    <name evidence="4" type="ORF">F6F3</name>
</gene>
<protein>
    <recommendedName>
        <fullName evidence="3">Auxin-responsive endogenous peptide 1</fullName>
    </recommendedName>
</protein>
<keyword id="KW-0927">Auxin signaling pathway</keyword>
<keyword id="KW-0963">Cytoplasm</keyword>
<keyword id="KW-0472">Membrane</keyword>
<keyword id="KW-0539">Nucleus</keyword>
<keyword id="KW-1185">Reference proteome</keyword>
<keyword id="KW-0812">Transmembrane</keyword>
<keyword id="KW-1133">Transmembrane helix</keyword>
<evidence type="ECO:0000255" key="1"/>
<evidence type="ECO:0000269" key="2">
    <source>
    </source>
</evidence>
<evidence type="ECO:0000303" key="3">
    <source>
    </source>
</evidence>
<evidence type="ECO:0000312" key="4">
    <source>
        <dbReference type="EMBL" id="AC023628"/>
    </source>
</evidence>
<feature type="chain" id="PRO_0000431425" description="Auxin-responsive endogenous peptide 1">
    <location>
        <begin position="1"/>
        <end position="40"/>
    </location>
</feature>
<feature type="transmembrane region" description="Helical" evidence="1">
    <location>
        <begin position="7"/>
        <end position="29"/>
    </location>
</feature>
<proteinExistence type="evidence at transcript level"/>